<organism>
    <name type="scientific">Pongo abelii</name>
    <name type="common">Sumatran orangutan</name>
    <name type="synonym">Pongo pygmaeus abelii</name>
    <dbReference type="NCBI Taxonomy" id="9601"/>
    <lineage>
        <taxon>Eukaryota</taxon>
        <taxon>Metazoa</taxon>
        <taxon>Chordata</taxon>
        <taxon>Craniata</taxon>
        <taxon>Vertebrata</taxon>
        <taxon>Euteleostomi</taxon>
        <taxon>Mammalia</taxon>
        <taxon>Eutheria</taxon>
        <taxon>Euarchontoglires</taxon>
        <taxon>Primates</taxon>
        <taxon>Haplorrhini</taxon>
        <taxon>Catarrhini</taxon>
        <taxon>Hominidae</taxon>
        <taxon>Pongo</taxon>
    </lineage>
</organism>
<gene>
    <name type="primary">RHBDD1</name>
    <name type="synonym">RHBDL4</name>
</gene>
<reference key="1">
    <citation type="submission" date="2004-11" db="EMBL/GenBank/DDBJ databases">
        <authorList>
            <consortium name="The German cDNA consortium"/>
        </authorList>
    </citation>
    <scope>NUCLEOTIDE SEQUENCE [LARGE SCALE MRNA]</scope>
    <source>
        <tissue>Kidney</tissue>
    </source>
</reference>
<protein>
    <recommendedName>
        <fullName>Rhomboid-related protein 4</fullName>
        <shortName>RRP4</shortName>
        <ecNumber>3.4.21.105</ecNumber>
    </recommendedName>
    <alternativeName>
        <fullName>Rhomboid domain-containing protein 1</fullName>
    </alternativeName>
    <alternativeName>
        <fullName>Rhomboid-like protein 4</fullName>
    </alternativeName>
</protein>
<evidence type="ECO:0000250" key="1"/>
<evidence type="ECO:0000250" key="2">
    <source>
        <dbReference type="UniProtKB" id="Q8TEB9"/>
    </source>
</evidence>
<evidence type="ECO:0000255" key="3"/>
<evidence type="ECO:0000256" key="4">
    <source>
        <dbReference type="SAM" id="MobiDB-lite"/>
    </source>
</evidence>
<evidence type="ECO:0000305" key="5"/>
<keyword id="KW-0053">Apoptosis</keyword>
<keyword id="KW-0221">Differentiation</keyword>
<keyword id="KW-0256">Endoplasmic reticulum</keyword>
<keyword id="KW-0378">Hydrolase</keyword>
<keyword id="KW-0472">Membrane</keyword>
<keyword id="KW-0496">Mitochondrion</keyword>
<keyword id="KW-0645">Protease</keyword>
<keyword id="KW-1185">Reference proteome</keyword>
<keyword id="KW-0720">Serine protease</keyword>
<keyword id="KW-0744">Spermatogenesis</keyword>
<keyword id="KW-0812">Transmembrane</keyword>
<keyword id="KW-1133">Transmembrane helix</keyword>
<feature type="chain" id="PRO_0000254191" description="Rhomboid-related protein 4">
    <location>
        <begin position="1"/>
        <end position="318"/>
    </location>
</feature>
<feature type="topological domain" description="Cytoplasmic" evidence="3">
    <location>
        <begin position="1"/>
        <end position="21"/>
    </location>
</feature>
<feature type="transmembrane region" description="Helical" evidence="3">
    <location>
        <begin position="22"/>
        <end position="42"/>
    </location>
</feature>
<feature type="topological domain" description="Extracellular" evidence="3">
    <location>
        <begin position="43"/>
        <end position="106"/>
    </location>
</feature>
<feature type="transmembrane region" description="Helical" evidence="3">
    <location>
        <begin position="107"/>
        <end position="127"/>
    </location>
</feature>
<feature type="topological domain" description="Cytoplasmic" evidence="3">
    <location>
        <begin position="128"/>
        <end position="137"/>
    </location>
</feature>
<feature type="transmembrane region" description="Helical" evidence="3">
    <location>
        <begin position="138"/>
        <end position="154"/>
    </location>
</feature>
<feature type="topological domain" description="Extracellular" evidence="3">
    <location>
        <begin position="155"/>
        <end position="179"/>
    </location>
</feature>
<feature type="transmembrane region" description="Helical" evidence="3">
    <location>
        <begin position="180"/>
        <end position="204"/>
    </location>
</feature>
<feature type="topological domain" description="Cytoplasmic" evidence="3">
    <location>
        <begin position="205"/>
        <end position="318"/>
    </location>
</feature>
<feature type="region of interest" description="Ubiquitin-binding domain (UBD)" evidence="1">
    <location>
        <begin position="271"/>
        <end position="286"/>
    </location>
</feature>
<feature type="region of interest" description="Disordered" evidence="4">
    <location>
        <begin position="285"/>
        <end position="318"/>
    </location>
</feature>
<feature type="region of interest" description="VCP/p97-interacting motif (VIM)" evidence="1">
    <location>
        <begin position="303"/>
        <end position="318"/>
    </location>
</feature>
<feature type="compositionally biased region" description="Basic and acidic residues" evidence="4">
    <location>
        <begin position="302"/>
        <end position="318"/>
    </location>
</feature>
<feature type="active site" description="Nucleophile" evidence="1">
    <location>
        <position position="144"/>
    </location>
</feature>
<feature type="active site" evidence="1">
    <location>
        <position position="195"/>
    </location>
</feature>
<proteinExistence type="evidence at transcript level"/>
<accession>Q5RBS4</accession>
<dbReference type="EC" id="3.4.21.105"/>
<dbReference type="EMBL" id="CR858560">
    <property type="protein sequence ID" value="CAH90786.1"/>
    <property type="molecule type" value="mRNA"/>
</dbReference>
<dbReference type="RefSeq" id="NP_001125444.1">
    <property type="nucleotide sequence ID" value="NM_001131972.1"/>
</dbReference>
<dbReference type="SMR" id="Q5RBS4"/>
<dbReference type="FunCoup" id="Q5RBS4">
    <property type="interactions" value="1496"/>
</dbReference>
<dbReference type="STRING" id="9601.ENSPPYP00000014790"/>
<dbReference type="MEROPS" id="S54.008"/>
<dbReference type="GeneID" id="100172352"/>
<dbReference type="KEGG" id="pon:100172352"/>
<dbReference type="CTD" id="84236"/>
<dbReference type="eggNOG" id="KOG2632">
    <property type="taxonomic scope" value="Eukaryota"/>
</dbReference>
<dbReference type="InParanoid" id="Q5RBS4"/>
<dbReference type="OrthoDB" id="10257275at2759"/>
<dbReference type="Proteomes" id="UP000001595">
    <property type="component" value="Unplaced"/>
</dbReference>
<dbReference type="GO" id="GO:0005789">
    <property type="term" value="C:endoplasmic reticulum membrane"/>
    <property type="evidence" value="ECO:0000250"/>
    <property type="project" value="UniProtKB"/>
</dbReference>
<dbReference type="GO" id="GO:0044322">
    <property type="term" value="C:endoplasmic reticulum quality control compartment"/>
    <property type="evidence" value="ECO:0000250"/>
    <property type="project" value="UniProtKB"/>
</dbReference>
<dbReference type="GO" id="GO:0031966">
    <property type="term" value="C:mitochondrial membrane"/>
    <property type="evidence" value="ECO:0007669"/>
    <property type="project" value="UniProtKB-SubCell"/>
</dbReference>
<dbReference type="GO" id="GO:0004175">
    <property type="term" value="F:endopeptidase activity"/>
    <property type="evidence" value="ECO:0000250"/>
    <property type="project" value="UniProtKB"/>
</dbReference>
<dbReference type="GO" id="GO:0004252">
    <property type="term" value="F:serine-type endopeptidase activity"/>
    <property type="evidence" value="ECO:0000250"/>
    <property type="project" value="UniProtKB"/>
</dbReference>
<dbReference type="GO" id="GO:0006915">
    <property type="term" value="P:apoptotic process"/>
    <property type="evidence" value="ECO:0007669"/>
    <property type="project" value="UniProtKB-KW"/>
</dbReference>
<dbReference type="GO" id="GO:0034620">
    <property type="term" value="P:cellular response to unfolded protein"/>
    <property type="evidence" value="ECO:0000250"/>
    <property type="project" value="UniProtKB"/>
</dbReference>
<dbReference type="GO" id="GO:0034644">
    <property type="term" value="P:cellular response to UV"/>
    <property type="evidence" value="ECO:0000250"/>
    <property type="project" value="UniProtKB"/>
</dbReference>
<dbReference type="GO" id="GO:0036503">
    <property type="term" value="P:ERAD pathway"/>
    <property type="evidence" value="ECO:0000250"/>
    <property type="project" value="UniProtKB"/>
</dbReference>
<dbReference type="GO" id="GO:0031293">
    <property type="term" value="P:membrane protein intracellular domain proteolysis"/>
    <property type="evidence" value="ECO:0000250"/>
    <property type="project" value="UniProtKB"/>
</dbReference>
<dbReference type="GO" id="GO:0033619">
    <property type="term" value="P:membrane protein proteolysis"/>
    <property type="evidence" value="ECO:0000250"/>
    <property type="project" value="UniProtKB"/>
</dbReference>
<dbReference type="GO" id="GO:0043066">
    <property type="term" value="P:negative regulation of apoptotic process"/>
    <property type="evidence" value="ECO:0000250"/>
    <property type="project" value="UniProtKB"/>
</dbReference>
<dbReference type="GO" id="GO:0045732">
    <property type="term" value="P:positive regulation of protein catabolic process"/>
    <property type="evidence" value="ECO:0000250"/>
    <property type="project" value="UniProtKB"/>
</dbReference>
<dbReference type="GO" id="GO:0010954">
    <property type="term" value="P:positive regulation of protein processing"/>
    <property type="evidence" value="ECO:0000250"/>
    <property type="project" value="UniProtKB"/>
</dbReference>
<dbReference type="GO" id="GO:0051047">
    <property type="term" value="P:positive regulation of secretion"/>
    <property type="evidence" value="ECO:0000250"/>
    <property type="project" value="UniProtKB"/>
</dbReference>
<dbReference type="GO" id="GO:0043687">
    <property type="term" value="P:post-translational protein modification"/>
    <property type="evidence" value="ECO:0000250"/>
    <property type="project" value="UniProtKB"/>
</dbReference>
<dbReference type="GO" id="GO:0048515">
    <property type="term" value="P:spermatid differentiation"/>
    <property type="evidence" value="ECO:0000250"/>
    <property type="project" value="UniProtKB"/>
</dbReference>
<dbReference type="FunFam" id="1.20.1540.10:FF:000009">
    <property type="entry name" value="Rhomboid domain containing 1"/>
    <property type="match status" value="1"/>
</dbReference>
<dbReference type="Gene3D" id="1.20.1540.10">
    <property type="entry name" value="Rhomboid-like"/>
    <property type="match status" value="1"/>
</dbReference>
<dbReference type="InterPro" id="IPR022764">
    <property type="entry name" value="Peptidase_S54_rhomboid_dom"/>
</dbReference>
<dbReference type="InterPro" id="IPR035952">
    <property type="entry name" value="Rhomboid-like_sf"/>
</dbReference>
<dbReference type="PANTHER" id="PTHR43066">
    <property type="entry name" value="RHOMBOID-RELATED PROTEIN"/>
    <property type="match status" value="1"/>
</dbReference>
<dbReference type="PANTHER" id="PTHR43066:SF14">
    <property type="entry name" value="RHOMBOID-RELATED PROTEIN 4"/>
    <property type="match status" value="1"/>
</dbReference>
<dbReference type="Pfam" id="PF01694">
    <property type="entry name" value="Rhomboid"/>
    <property type="match status" value="1"/>
</dbReference>
<dbReference type="SUPFAM" id="SSF144091">
    <property type="entry name" value="Rhomboid-like"/>
    <property type="match status" value="1"/>
</dbReference>
<name>RHBL4_PONAB</name>
<comment type="function">
    <text evidence="1">Intramembrane-cleaving serine protease that cleaves single transmembrane or multi-pass membrane proteins in the hydrophobic plane of the membrane, luminal loops and juxtamembrane regions. Involved in regulated intramembrane proteolysis and the subsequent release of functional polypeptides from their membrane anchors. Functional component of endoplasmic reticulum-associated degradation (ERAD) for misfolded membrane proteins. Required for the degradation process of some specific misfolded endoplasmic reticulum (ER) luminal proteins. Participates in the transfer of misfolded proteins from the ER to the cytosol, where they are destroyed by the proteasome in a ubiquitin-dependent manner. Functions in BIK, MPZ, PKD1, PTCRA, RHO, STEAP3 and TRAC processing. Involved in the regulation of exosomal secretion; inhibits the TSAP6-mediated secretion pathway. Involved in the regulation of apoptosis; modulates BIK-mediated apoptotic activity. Also plays a role in the regulation of spermatogenesis; inhibits apoptotic activity in spermatogonia (By similarity).</text>
</comment>
<comment type="catalytic activity">
    <reaction>
        <text>Cleaves type-1 transmembrane domains using a catalytic dyad composed of serine and histidine that are contributed by different transmembrane domains.</text>
        <dbReference type="EC" id="3.4.21.105"/>
    </reaction>
</comment>
<comment type="activity regulation">
    <text evidence="1">Inhibited by aprotinin.</text>
</comment>
<comment type="subunit">
    <text evidence="1">Interacts with BIK and STEAP3. Interacts (via C-terminal domain) with VCP. Interacts with ubiquitin and ubiquitinated proteins (By similarity).</text>
</comment>
<comment type="subcellular location">
    <subcellularLocation>
        <location evidence="2">Endoplasmic reticulum membrane</location>
        <topology evidence="3">Multi-pass membrane protein</topology>
    </subcellularLocation>
    <subcellularLocation>
        <location evidence="2">Mitochondrion membrane</location>
        <topology evidence="3">Multi-pass membrane protein</topology>
    </subcellularLocation>
</comment>
<comment type="similarity">
    <text evidence="5">Belongs to the peptidase S54 family.</text>
</comment>
<comment type="caution">
    <text evidence="2">One study reported that the protein is not localized in the mitochondrion.</text>
</comment>
<sequence>MQRRSRGINTGLILLLSQIFHVGINNIPPVTLATLALNIWFFLNPQKPLYSSCLSVEKCYQQRDWQRLLLSPLHHADDWHLYFNTASVLWKGINLERRLGSRWFAYVITTFSVLTGVVYLLLQFAVAEFMDEPDFKRSCAVGFSGVLFALKVLNNHYCPGGFVNILGFPVPNRFACWVELVAIHLFSPGTSFAGHQAGILVGLMYTQGPLKKIMEACAGLGGFSSSVGYPGQQYYFNSSGSSGYQDYYPHGRPDHYEEAPRNYDTYTAGLSEEEQLERALQASLWDRGHTRNSPPPYGFHLSPEEEMRRQRLHRFDSQ</sequence>